<accession>Q2XXQ5</accession>
<sequence>MFVFILLSLAAVLQQSFGNVDFNSESPRIKAKQREIVDKHNAFRRSVRPTASNMLRMEWYSEAASNAERWAYRCILDHSPKTSRILNGIKCGENIYMSSIPMTWIDIIKLWHDEYKNFIYGVGANPPGSVIGHYTQIVWYKSYRVGCAASYCPSSSYNYFYVCQYCPAGNFAGLTATPYKSGPTCGDCPSACDNGLCTNPCSREDVFMNCKSLVAQSNCQDDYIRKNCPATCFCPNK</sequence>
<keyword id="KW-0108">Calcium channel impairing toxin</keyword>
<keyword id="KW-1015">Disulfide bond</keyword>
<keyword id="KW-0872">Ion channel impairing toxin</keyword>
<keyword id="KW-0528">Neurotoxin</keyword>
<keyword id="KW-0964">Secreted</keyword>
<keyword id="KW-0732">Signal</keyword>
<keyword id="KW-0800">Toxin</keyword>
<dbReference type="EMBL" id="DQ139890">
    <property type="protein sequence ID" value="AAZ75596.1"/>
    <property type="molecule type" value="mRNA"/>
</dbReference>
<dbReference type="SMR" id="Q2XXQ5"/>
<dbReference type="GO" id="GO:0005576">
    <property type="term" value="C:extracellular region"/>
    <property type="evidence" value="ECO:0007669"/>
    <property type="project" value="UniProtKB-SubCell"/>
</dbReference>
<dbReference type="GO" id="GO:0005246">
    <property type="term" value="F:calcium channel regulator activity"/>
    <property type="evidence" value="ECO:0007669"/>
    <property type="project" value="UniProtKB-KW"/>
</dbReference>
<dbReference type="GO" id="GO:0090729">
    <property type="term" value="F:toxin activity"/>
    <property type="evidence" value="ECO:0007669"/>
    <property type="project" value="UniProtKB-KW"/>
</dbReference>
<dbReference type="CDD" id="cd05383">
    <property type="entry name" value="CAP_CRISP"/>
    <property type="match status" value="1"/>
</dbReference>
<dbReference type="FunFam" id="1.10.10.740:FF:000001">
    <property type="entry name" value="Cysteine-rich secretory protein 2"/>
    <property type="match status" value="1"/>
</dbReference>
<dbReference type="FunFam" id="3.40.33.10:FF:000005">
    <property type="entry name" value="Cysteine-rich secretory protein 2"/>
    <property type="match status" value="1"/>
</dbReference>
<dbReference type="Gene3D" id="3.40.33.10">
    <property type="entry name" value="CAP"/>
    <property type="match status" value="1"/>
</dbReference>
<dbReference type="Gene3D" id="1.10.10.740">
    <property type="entry name" value="Crisp domain"/>
    <property type="match status" value="1"/>
</dbReference>
<dbReference type="InterPro" id="IPR018244">
    <property type="entry name" value="Allrgn_V5/Tpx1_CS"/>
</dbReference>
<dbReference type="InterPro" id="IPR014044">
    <property type="entry name" value="CAP_dom"/>
</dbReference>
<dbReference type="InterPro" id="IPR035940">
    <property type="entry name" value="CAP_sf"/>
</dbReference>
<dbReference type="InterPro" id="IPR042076">
    <property type="entry name" value="Crisp-like_dom"/>
</dbReference>
<dbReference type="InterPro" id="IPR001283">
    <property type="entry name" value="CRISP-related"/>
</dbReference>
<dbReference type="InterPro" id="IPR013871">
    <property type="entry name" value="Cysteine_rich_secretory"/>
</dbReference>
<dbReference type="InterPro" id="IPR034117">
    <property type="entry name" value="SCP_CRISP"/>
</dbReference>
<dbReference type="InterPro" id="IPR003582">
    <property type="entry name" value="ShKT_dom"/>
</dbReference>
<dbReference type="PANTHER" id="PTHR10334">
    <property type="entry name" value="CYSTEINE-RICH SECRETORY PROTEIN-RELATED"/>
    <property type="match status" value="1"/>
</dbReference>
<dbReference type="Pfam" id="PF00188">
    <property type="entry name" value="CAP"/>
    <property type="match status" value="1"/>
</dbReference>
<dbReference type="Pfam" id="PF08562">
    <property type="entry name" value="Crisp"/>
    <property type="match status" value="1"/>
</dbReference>
<dbReference type="PRINTS" id="PR00837">
    <property type="entry name" value="V5TPXLIKE"/>
</dbReference>
<dbReference type="SMART" id="SM00198">
    <property type="entry name" value="SCP"/>
    <property type="match status" value="1"/>
</dbReference>
<dbReference type="SUPFAM" id="SSF57546">
    <property type="entry name" value="Crisp domain-like"/>
    <property type="match status" value="1"/>
</dbReference>
<dbReference type="SUPFAM" id="SSF55797">
    <property type="entry name" value="PR-1-like"/>
    <property type="match status" value="1"/>
</dbReference>
<dbReference type="PROSITE" id="PS01009">
    <property type="entry name" value="CRISP_1"/>
    <property type="match status" value="1"/>
</dbReference>
<dbReference type="PROSITE" id="PS01010">
    <property type="entry name" value="CRISP_2"/>
    <property type="match status" value="1"/>
</dbReference>
<dbReference type="PROSITE" id="PS51670">
    <property type="entry name" value="SHKT"/>
    <property type="match status" value="1"/>
</dbReference>
<evidence type="ECO:0000250" key="1"/>
<evidence type="ECO:0000255" key="2">
    <source>
        <dbReference type="PROSITE-ProRule" id="PRU01005"/>
    </source>
</evidence>
<evidence type="ECO:0000305" key="3"/>
<name>CRVP2_DISTY</name>
<reference key="1">
    <citation type="journal article" date="2006" name="Nature">
        <title>Early evolution of the venom system in lizards and snakes.</title>
        <authorList>
            <person name="Fry B.G."/>
            <person name="Vidal N."/>
            <person name="Norman J.A."/>
            <person name="Vonk F.J."/>
            <person name="Scheib H."/>
            <person name="Ramjan S.F.R."/>
            <person name="Kuruppu S."/>
            <person name="Fung K."/>
            <person name="Blair Hedges S."/>
            <person name="Richardson M.K."/>
            <person name="Hodgson W.C."/>
            <person name="Ignjatovic V."/>
            <person name="Summerhayes R."/>
            <person name="Kochva E."/>
        </authorList>
    </citation>
    <scope>NUCLEOTIDE SEQUENCE [LARGE SCALE MRNA]</scope>
    <source>
        <tissue>Venom gland</tissue>
    </source>
</reference>
<feature type="signal peptide" evidence="1">
    <location>
        <begin position="1"/>
        <end position="18"/>
    </location>
</feature>
<feature type="chain" id="PRO_0000380650" description="Cysteine-rich venom protein DIS2">
    <location>
        <begin position="19"/>
        <end position="237"/>
    </location>
</feature>
<feature type="domain" description="SCP">
    <location>
        <begin position="37"/>
        <end position="165"/>
    </location>
</feature>
<feature type="domain" description="ShKT" evidence="2">
    <location>
        <begin position="201"/>
        <end position="234"/>
    </location>
</feature>
<feature type="disulfide bond" evidence="2">
    <location>
        <begin position="74"/>
        <end position="152"/>
    </location>
</feature>
<feature type="disulfide bond" evidence="2">
    <location>
        <begin position="91"/>
        <end position="166"/>
    </location>
</feature>
<feature type="disulfide bond" evidence="2">
    <location>
        <begin position="147"/>
        <end position="163"/>
    </location>
</feature>
<feature type="disulfide bond" evidence="2">
    <location>
        <begin position="185"/>
        <end position="192"/>
    </location>
</feature>
<feature type="disulfide bond" evidence="2">
    <location>
        <begin position="188"/>
        <end position="197"/>
    </location>
</feature>
<feature type="disulfide bond" evidence="2">
    <location>
        <begin position="201"/>
        <end position="234"/>
    </location>
</feature>
<feature type="disulfide bond" evidence="2">
    <location>
        <begin position="219"/>
        <end position="232"/>
    </location>
</feature>
<protein>
    <recommendedName>
        <fullName>Cysteine-rich venom protein DIS2</fullName>
        <shortName>CRVP</shortName>
    </recommendedName>
    <alternativeName>
        <fullName>Cysteine-rich secretory protein DIS2</fullName>
        <shortName>CRISP-DIS2</shortName>
    </alternativeName>
</protein>
<proteinExistence type="evidence at transcript level"/>
<comment type="function">
    <text evidence="1">Weakly blocks contraction of smooth muscle elicited by high potassium-induced depolarization, but does not block caffeine-stimulated contraction. May target voltage-gated calcium channels on smooth muscle (By similarity).</text>
</comment>
<comment type="subcellular location">
    <subcellularLocation>
        <location evidence="1">Secreted</location>
    </subcellularLocation>
</comment>
<comment type="tissue specificity">
    <text>Expressed by the venom gland.</text>
</comment>
<comment type="similarity">
    <text evidence="3">Belongs to the CRISP family.</text>
</comment>
<organism>
    <name type="scientific">Dispholidus typus</name>
    <name type="common">Boomslang</name>
    <name type="synonym">Bucephalus typus</name>
    <dbReference type="NCBI Taxonomy" id="46295"/>
    <lineage>
        <taxon>Eukaryota</taxon>
        <taxon>Metazoa</taxon>
        <taxon>Chordata</taxon>
        <taxon>Craniata</taxon>
        <taxon>Vertebrata</taxon>
        <taxon>Euteleostomi</taxon>
        <taxon>Lepidosauria</taxon>
        <taxon>Squamata</taxon>
        <taxon>Bifurcata</taxon>
        <taxon>Unidentata</taxon>
        <taxon>Episquamata</taxon>
        <taxon>Toxicofera</taxon>
        <taxon>Serpentes</taxon>
        <taxon>Colubroidea</taxon>
        <taxon>Colubridae</taxon>
        <taxon>Colubrinae</taxon>
        <taxon>Dispholidus</taxon>
    </lineage>
</organism>